<organism>
    <name type="scientific">Mycobacterium sp. (strain MCS)</name>
    <dbReference type="NCBI Taxonomy" id="164756"/>
    <lineage>
        <taxon>Bacteria</taxon>
        <taxon>Bacillati</taxon>
        <taxon>Actinomycetota</taxon>
        <taxon>Actinomycetes</taxon>
        <taxon>Mycobacteriales</taxon>
        <taxon>Mycobacteriaceae</taxon>
        <taxon>Mycobacterium</taxon>
    </lineage>
</organism>
<keyword id="KW-0414">Isoprene biosynthesis</keyword>
<keyword id="KW-0460">Magnesium</keyword>
<keyword id="KW-0479">Metal-binding</keyword>
<keyword id="KW-0784">Thiamine biosynthesis</keyword>
<keyword id="KW-0786">Thiamine pyrophosphate</keyword>
<keyword id="KW-0808">Transferase</keyword>
<feature type="chain" id="PRO_1000019044" description="1-deoxy-D-xylulose-5-phosphate synthase">
    <location>
        <begin position="1"/>
        <end position="638"/>
    </location>
</feature>
<feature type="binding site" evidence="1">
    <location>
        <position position="71"/>
    </location>
    <ligand>
        <name>thiamine diphosphate</name>
        <dbReference type="ChEBI" id="CHEBI:58937"/>
    </ligand>
</feature>
<feature type="binding site" evidence="1">
    <location>
        <begin position="112"/>
        <end position="114"/>
    </location>
    <ligand>
        <name>thiamine diphosphate</name>
        <dbReference type="ChEBI" id="CHEBI:58937"/>
    </ligand>
</feature>
<feature type="binding site" evidence="1">
    <location>
        <position position="144"/>
    </location>
    <ligand>
        <name>Mg(2+)</name>
        <dbReference type="ChEBI" id="CHEBI:18420"/>
    </ligand>
</feature>
<feature type="binding site" evidence="1">
    <location>
        <begin position="145"/>
        <end position="146"/>
    </location>
    <ligand>
        <name>thiamine diphosphate</name>
        <dbReference type="ChEBI" id="CHEBI:58937"/>
    </ligand>
</feature>
<feature type="binding site" evidence="1">
    <location>
        <position position="173"/>
    </location>
    <ligand>
        <name>Mg(2+)</name>
        <dbReference type="ChEBI" id="CHEBI:18420"/>
    </ligand>
</feature>
<feature type="binding site" evidence="1">
    <location>
        <position position="173"/>
    </location>
    <ligand>
        <name>thiamine diphosphate</name>
        <dbReference type="ChEBI" id="CHEBI:58937"/>
    </ligand>
</feature>
<feature type="binding site" evidence="1">
    <location>
        <position position="284"/>
    </location>
    <ligand>
        <name>thiamine diphosphate</name>
        <dbReference type="ChEBI" id="CHEBI:58937"/>
    </ligand>
</feature>
<feature type="binding site" evidence="1">
    <location>
        <position position="365"/>
    </location>
    <ligand>
        <name>thiamine diphosphate</name>
        <dbReference type="ChEBI" id="CHEBI:58937"/>
    </ligand>
</feature>
<reference key="1">
    <citation type="submission" date="2006-06" db="EMBL/GenBank/DDBJ databases">
        <title>Complete sequence of chromosome of Mycobacterium sp. MCS.</title>
        <authorList>
            <consortium name="US DOE Joint Genome Institute"/>
            <person name="Copeland A."/>
            <person name="Lucas S."/>
            <person name="Lapidus A."/>
            <person name="Barry K."/>
            <person name="Detter J.C."/>
            <person name="Glavina del Rio T."/>
            <person name="Hammon N."/>
            <person name="Israni S."/>
            <person name="Dalin E."/>
            <person name="Tice H."/>
            <person name="Pitluck S."/>
            <person name="Martinez M."/>
            <person name="Schmutz J."/>
            <person name="Larimer F."/>
            <person name="Land M."/>
            <person name="Hauser L."/>
            <person name="Kyrpides N."/>
            <person name="Kim E."/>
            <person name="Miller C.D."/>
            <person name="Hughes J.E."/>
            <person name="Anderson A.J."/>
            <person name="Sims R.C."/>
            <person name="Richardson P."/>
        </authorList>
    </citation>
    <scope>NUCLEOTIDE SEQUENCE [LARGE SCALE GENOMIC DNA]</scope>
    <source>
        <strain>MCS</strain>
    </source>
</reference>
<proteinExistence type="inferred from homology"/>
<accession>Q1B9W8</accession>
<name>DXS_MYCSS</name>
<gene>
    <name evidence="1" type="primary">dxs</name>
    <name type="ordered locus">Mmcs_2208</name>
</gene>
<comment type="function">
    <text evidence="1">Catalyzes the acyloin condensation reaction between C atoms 2 and 3 of pyruvate and glyceraldehyde 3-phosphate to yield 1-deoxy-D-xylulose-5-phosphate (DXP).</text>
</comment>
<comment type="catalytic activity">
    <reaction evidence="1">
        <text>D-glyceraldehyde 3-phosphate + pyruvate + H(+) = 1-deoxy-D-xylulose 5-phosphate + CO2</text>
        <dbReference type="Rhea" id="RHEA:12605"/>
        <dbReference type="ChEBI" id="CHEBI:15361"/>
        <dbReference type="ChEBI" id="CHEBI:15378"/>
        <dbReference type="ChEBI" id="CHEBI:16526"/>
        <dbReference type="ChEBI" id="CHEBI:57792"/>
        <dbReference type="ChEBI" id="CHEBI:59776"/>
        <dbReference type="EC" id="2.2.1.7"/>
    </reaction>
</comment>
<comment type="cofactor">
    <cofactor evidence="1">
        <name>Mg(2+)</name>
        <dbReference type="ChEBI" id="CHEBI:18420"/>
    </cofactor>
    <text evidence="1">Binds 1 Mg(2+) ion per subunit.</text>
</comment>
<comment type="cofactor">
    <cofactor evidence="1">
        <name>thiamine diphosphate</name>
        <dbReference type="ChEBI" id="CHEBI:58937"/>
    </cofactor>
    <text evidence="1">Binds 1 thiamine pyrophosphate per subunit.</text>
</comment>
<comment type="pathway">
    <text evidence="1">Metabolic intermediate biosynthesis; 1-deoxy-D-xylulose 5-phosphate biosynthesis; 1-deoxy-D-xylulose 5-phosphate from D-glyceraldehyde 3-phosphate and pyruvate: step 1/1.</text>
</comment>
<comment type="subunit">
    <text evidence="1">Homodimer.</text>
</comment>
<comment type="similarity">
    <text evidence="1">Belongs to the transketolase family. DXPS subfamily.</text>
</comment>
<protein>
    <recommendedName>
        <fullName evidence="1">1-deoxy-D-xylulose-5-phosphate synthase</fullName>
        <ecNumber evidence="1">2.2.1.7</ecNumber>
    </recommendedName>
    <alternativeName>
        <fullName evidence="1">1-deoxyxylulose-5-phosphate synthase</fullName>
        <shortName evidence="1">DXP synthase</shortName>
        <shortName evidence="1">DXPS</shortName>
    </alternativeName>
</protein>
<dbReference type="EC" id="2.2.1.7" evidence="1"/>
<dbReference type="EMBL" id="CP000384">
    <property type="protein sequence ID" value="ABG08316.1"/>
    <property type="molecule type" value="Genomic_DNA"/>
</dbReference>
<dbReference type="SMR" id="Q1B9W8"/>
<dbReference type="KEGG" id="mmc:Mmcs_2208"/>
<dbReference type="HOGENOM" id="CLU_009227_1_4_11"/>
<dbReference type="BioCyc" id="MSP164756:G1G6O-2255-MONOMER"/>
<dbReference type="UniPathway" id="UPA00064">
    <property type="reaction ID" value="UER00091"/>
</dbReference>
<dbReference type="GO" id="GO:0005829">
    <property type="term" value="C:cytosol"/>
    <property type="evidence" value="ECO:0007669"/>
    <property type="project" value="TreeGrafter"/>
</dbReference>
<dbReference type="GO" id="GO:0008661">
    <property type="term" value="F:1-deoxy-D-xylulose-5-phosphate synthase activity"/>
    <property type="evidence" value="ECO:0007669"/>
    <property type="project" value="UniProtKB-UniRule"/>
</dbReference>
<dbReference type="GO" id="GO:0000287">
    <property type="term" value="F:magnesium ion binding"/>
    <property type="evidence" value="ECO:0007669"/>
    <property type="project" value="UniProtKB-UniRule"/>
</dbReference>
<dbReference type="GO" id="GO:0030976">
    <property type="term" value="F:thiamine pyrophosphate binding"/>
    <property type="evidence" value="ECO:0007669"/>
    <property type="project" value="UniProtKB-UniRule"/>
</dbReference>
<dbReference type="GO" id="GO:0052865">
    <property type="term" value="P:1-deoxy-D-xylulose 5-phosphate biosynthetic process"/>
    <property type="evidence" value="ECO:0007669"/>
    <property type="project" value="UniProtKB-UniPathway"/>
</dbReference>
<dbReference type="GO" id="GO:0019288">
    <property type="term" value="P:isopentenyl diphosphate biosynthetic process, methylerythritol 4-phosphate pathway"/>
    <property type="evidence" value="ECO:0007669"/>
    <property type="project" value="TreeGrafter"/>
</dbReference>
<dbReference type="GO" id="GO:0016114">
    <property type="term" value="P:terpenoid biosynthetic process"/>
    <property type="evidence" value="ECO:0007669"/>
    <property type="project" value="UniProtKB-UniRule"/>
</dbReference>
<dbReference type="GO" id="GO:0009228">
    <property type="term" value="P:thiamine biosynthetic process"/>
    <property type="evidence" value="ECO:0007669"/>
    <property type="project" value="UniProtKB-UniRule"/>
</dbReference>
<dbReference type="CDD" id="cd02007">
    <property type="entry name" value="TPP_DXS"/>
    <property type="match status" value="1"/>
</dbReference>
<dbReference type="CDD" id="cd07033">
    <property type="entry name" value="TPP_PYR_DXS_TK_like"/>
    <property type="match status" value="1"/>
</dbReference>
<dbReference type="FunFam" id="3.40.50.920:FF:000002">
    <property type="entry name" value="1-deoxy-D-xylulose-5-phosphate synthase"/>
    <property type="match status" value="1"/>
</dbReference>
<dbReference type="FunFam" id="3.40.50.970:FF:000005">
    <property type="entry name" value="1-deoxy-D-xylulose-5-phosphate synthase"/>
    <property type="match status" value="1"/>
</dbReference>
<dbReference type="Gene3D" id="3.40.50.920">
    <property type="match status" value="1"/>
</dbReference>
<dbReference type="Gene3D" id="3.40.50.970">
    <property type="match status" value="2"/>
</dbReference>
<dbReference type="HAMAP" id="MF_00315">
    <property type="entry name" value="DXP_synth"/>
    <property type="match status" value="1"/>
</dbReference>
<dbReference type="InterPro" id="IPR005477">
    <property type="entry name" value="Dxylulose-5-P_synthase"/>
</dbReference>
<dbReference type="InterPro" id="IPR029061">
    <property type="entry name" value="THDP-binding"/>
</dbReference>
<dbReference type="InterPro" id="IPR009014">
    <property type="entry name" value="Transketo_C/PFOR_II"/>
</dbReference>
<dbReference type="InterPro" id="IPR005475">
    <property type="entry name" value="Transketolase-like_Pyr-bd"/>
</dbReference>
<dbReference type="InterPro" id="IPR020826">
    <property type="entry name" value="Transketolase_BS"/>
</dbReference>
<dbReference type="InterPro" id="IPR033248">
    <property type="entry name" value="Transketolase_C"/>
</dbReference>
<dbReference type="InterPro" id="IPR049557">
    <property type="entry name" value="Transketolase_CS"/>
</dbReference>
<dbReference type="NCBIfam" id="TIGR00204">
    <property type="entry name" value="dxs"/>
    <property type="match status" value="1"/>
</dbReference>
<dbReference type="NCBIfam" id="NF003933">
    <property type="entry name" value="PRK05444.2-2"/>
    <property type="match status" value="1"/>
</dbReference>
<dbReference type="PANTHER" id="PTHR43322">
    <property type="entry name" value="1-D-DEOXYXYLULOSE 5-PHOSPHATE SYNTHASE-RELATED"/>
    <property type="match status" value="1"/>
</dbReference>
<dbReference type="PANTHER" id="PTHR43322:SF5">
    <property type="entry name" value="1-DEOXY-D-XYLULOSE-5-PHOSPHATE SYNTHASE, CHLOROPLASTIC"/>
    <property type="match status" value="1"/>
</dbReference>
<dbReference type="Pfam" id="PF13292">
    <property type="entry name" value="DXP_synthase_N"/>
    <property type="match status" value="1"/>
</dbReference>
<dbReference type="Pfam" id="PF02779">
    <property type="entry name" value="Transket_pyr"/>
    <property type="match status" value="1"/>
</dbReference>
<dbReference type="Pfam" id="PF02780">
    <property type="entry name" value="Transketolase_C"/>
    <property type="match status" value="1"/>
</dbReference>
<dbReference type="SMART" id="SM00861">
    <property type="entry name" value="Transket_pyr"/>
    <property type="match status" value="1"/>
</dbReference>
<dbReference type="SUPFAM" id="SSF52518">
    <property type="entry name" value="Thiamin diphosphate-binding fold (THDP-binding)"/>
    <property type="match status" value="2"/>
</dbReference>
<dbReference type="SUPFAM" id="SSF52922">
    <property type="entry name" value="TK C-terminal domain-like"/>
    <property type="match status" value="1"/>
</dbReference>
<dbReference type="PROSITE" id="PS00801">
    <property type="entry name" value="TRANSKETOLASE_1"/>
    <property type="match status" value="1"/>
</dbReference>
<dbReference type="PROSITE" id="PS00802">
    <property type="entry name" value="TRANSKETOLASE_2"/>
    <property type="match status" value="1"/>
</dbReference>
<sequence length="638" mass="68120">MLEQIRGPADLQHLSQSALSELAGEIRQFLIHKVAATGGHLGPNLGVVELTLALHRVFDSPHDPLIFDTGHQAYVHKMLTGRSHEFDSLRKKDGLSGYPSRSESEHDWVESSHASAALSYADGLAKAFELTGHRNRHVVAVVGDGALTGGMCWEALNNIAAARRPVVIVVNDNGRSYAPTIGGFADHLAALRLQPGYERVLEEGRKAVRGLPVIGEFCYQCMHSVKAGIKDALSPQVMFTDLGLKYVGPIDGHDEHAVESALRHARGFNAPVIVHVVTRKGMGYAPAENDEAEQMHACGVIDVATGRATKVAAPGWTSSFSEALIDYGAKRRDIVAITAAMPGPTGLSAFRDRFPDRFFDVGIAEQHAMTSAAGLAMGGLHPVVAIYSTFLNRAFDQLMMDVALHKLPVTLVLDRSGVTGPDGASHNGMWDLSVLGIVPGMRVAAPRDGARLREELGEALDVNDAPTAIRFPKGDVGEDIPAVRRHRGVDVLAEPADGLSDDVLLVAVGPFASMALTVAERLRKQGIGVTVVDPRWVLPVPEVLTEFAAAHKLVVTVEDNGLHGGIGSSVSAALRHAEVDVPCRDVGLPQQFFDHASRGEVLADVGVTDRNISRQITGWVAALGATPADADEVSERLD</sequence>
<evidence type="ECO:0000255" key="1">
    <source>
        <dbReference type="HAMAP-Rule" id="MF_00315"/>
    </source>
</evidence>